<keyword id="KW-0560">Oxidoreductase</keyword>
<keyword id="KW-0614">Plasmid</keyword>
<keyword id="KW-1185">Reference proteome</keyword>
<keyword id="KW-0784">Thiamine biosynthesis</keyword>
<accession>O34292</accession>
<accession>Q2K207</accession>
<geneLocation type="plasmid">
    <name>p42b</name>
</geneLocation>
<dbReference type="EMBL" id="AF004408">
    <property type="protein sequence ID" value="AAC45973.1"/>
    <property type="molecule type" value="Genomic_DNA"/>
</dbReference>
<dbReference type="EMBL" id="CP000135">
    <property type="protein sequence ID" value="ABC93123.1"/>
    <property type="molecule type" value="Genomic_DNA"/>
</dbReference>
<dbReference type="PIR" id="T44255">
    <property type="entry name" value="T44255"/>
</dbReference>
<dbReference type="SMR" id="O34292"/>
<dbReference type="KEGG" id="ret:RHE_PB00081"/>
<dbReference type="HOGENOM" id="CLU_007884_1_0_5"/>
<dbReference type="UniPathway" id="UPA00060"/>
<dbReference type="Proteomes" id="UP000001936">
    <property type="component" value="Plasmid p42b"/>
</dbReference>
<dbReference type="GO" id="GO:0005737">
    <property type="term" value="C:cytoplasm"/>
    <property type="evidence" value="ECO:0007669"/>
    <property type="project" value="TreeGrafter"/>
</dbReference>
<dbReference type="GO" id="GO:0050660">
    <property type="term" value="F:flavin adenine dinucleotide binding"/>
    <property type="evidence" value="ECO:0007669"/>
    <property type="project" value="InterPro"/>
</dbReference>
<dbReference type="GO" id="GO:0016491">
    <property type="term" value="F:oxidoreductase activity"/>
    <property type="evidence" value="ECO:0007669"/>
    <property type="project" value="UniProtKB-KW"/>
</dbReference>
<dbReference type="GO" id="GO:0009228">
    <property type="term" value="P:thiamine biosynthetic process"/>
    <property type="evidence" value="ECO:0007669"/>
    <property type="project" value="UniProtKB-KW"/>
</dbReference>
<dbReference type="GO" id="GO:0009229">
    <property type="term" value="P:thiamine diphosphate biosynthetic process"/>
    <property type="evidence" value="ECO:0007669"/>
    <property type="project" value="UniProtKB-UniPathway"/>
</dbReference>
<dbReference type="Gene3D" id="3.30.9.10">
    <property type="entry name" value="D-Amino Acid Oxidase, subunit A, domain 2"/>
    <property type="match status" value="1"/>
</dbReference>
<dbReference type="Gene3D" id="3.50.50.60">
    <property type="entry name" value="FAD/NAD(P)-binding domain"/>
    <property type="match status" value="1"/>
</dbReference>
<dbReference type="InterPro" id="IPR006076">
    <property type="entry name" value="FAD-dep_OxRdtase"/>
</dbReference>
<dbReference type="InterPro" id="IPR036188">
    <property type="entry name" value="FAD/NAD-bd_sf"/>
</dbReference>
<dbReference type="InterPro" id="IPR012727">
    <property type="entry name" value="Gly_oxidase_ThiO"/>
</dbReference>
<dbReference type="NCBIfam" id="TIGR02352">
    <property type="entry name" value="thiamin_ThiO"/>
    <property type="match status" value="1"/>
</dbReference>
<dbReference type="PANTHER" id="PTHR13847:SF289">
    <property type="entry name" value="GLYCINE OXIDASE"/>
    <property type="match status" value="1"/>
</dbReference>
<dbReference type="PANTHER" id="PTHR13847">
    <property type="entry name" value="SARCOSINE DEHYDROGENASE-RELATED"/>
    <property type="match status" value="1"/>
</dbReference>
<dbReference type="Pfam" id="PF01266">
    <property type="entry name" value="DAO"/>
    <property type="match status" value="1"/>
</dbReference>
<dbReference type="SUPFAM" id="SSF54373">
    <property type="entry name" value="FAD-linked reductases, C-terminal domain"/>
    <property type="match status" value="1"/>
</dbReference>
<dbReference type="SUPFAM" id="SSF51971">
    <property type="entry name" value="Nucleotide-binding domain"/>
    <property type="match status" value="1"/>
</dbReference>
<reference key="1">
    <citation type="journal article" date="1997" name="J. Bacteriol.">
        <title>Expression of thiamin biosynthetic genes (thiCOGE) and production of symbiotic terminal oxidase cbb3 in Rhizobium etli.</title>
        <authorList>
            <person name="Miranda-Rios J."/>
            <person name="Morera C."/>
            <person name="Taboada H."/>
            <person name="Davalos A."/>
            <person name="Encarnacion S."/>
            <person name="Mora J."/>
            <person name="Soberon M."/>
        </authorList>
    </citation>
    <scope>NUCLEOTIDE SEQUENCE [GENOMIC DNA]</scope>
    <source>
        <strain>CE3</strain>
    </source>
</reference>
<reference key="2">
    <citation type="journal article" date="2006" name="Proc. Natl. Acad. Sci. U.S.A.">
        <title>The partitioned Rhizobium etli genome: genetic and metabolic redundancy in seven interacting replicons.</title>
        <authorList>
            <person name="Gonzalez V."/>
            <person name="Santamaria R.I."/>
            <person name="Bustos P."/>
            <person name="Hernandez-Gonzalez I."/>
            <person name="Medrano-Soto A."/>
            <person name="Moreno-Hagelsieb G."/>
            <person name="Janga S.C."/>
            <person name="Ramirez M.A."/>
            <person name="Jimenez-Jacinto V."/>
            <person name="Collado-Vides J."/>
            <person name="Davila G."/>
        </authorList>
    </citation>
    <scope>NUCLEOTIDE SEQUENCE [LARGE SCALE GENOMIC DNA]</scope>
    <source>
        <strain>ATCC 51251 / DSM 11541 / JCM 21823 / NBRC 15573 / CFN 42</strain>
    </source>
</reference>
<organism>
    <name type="scientific">Rhizobium etli (strain ATCC 51251 / DSM 11541 / JCM 21823 / NBRC 15573 / CFN 42)</name>
    <dbReference type="NCBI Taxonomy" id="347834"/>
    <lineage>
        <taxon>Bacteria</taxon>
        <taxon>Pseudomonadati</taxon>
        <taxon>Pseudomonadota</taxon>
        <taxon>Alphaproteobacteria</taxon>
        <taxon>Hyphomicrobiales</taxon>
        <taxon>Rhizobiaceae</taxon>
        <taxon>Rhizobium/Agrobacterium group</taxon>
        <taxon>Rhizobium</taxon>
    </lineage>
</organism>
<proteinExistence type="predicted"/>
<protein>
    <recommendedName>
        <fullName>Putative thiamine biosynthesis oxidoreductase ThiO</fullName>
    </recommendedName>
</protein>
<sequence>MRILVNGAGVAGLTVAWQLYRHGFRVTLAERAGTVGAGASGFAGGMLAPWCERESAEEPVLTLGRLAADWWEAALPGHVHRRGTLVVAGGRDTGELDRFSRRTSGWEWLDEVAIAALEPDLAGRFRRALFFRQEAHLDPRQALAALAAGLEDARMRLTLGVVGESDVDHDRVVDCTGAAQIGRLPGLRGVRGEMLCVETTEVSLSRPVRLLHPRHPIYIVPRDKNRFMVGATMIESDDGGPITARSLMELLNAAYAMHPAFGEARVTETGAGVRPAYPDNLPRVTQEGRTLHVNGLYRHGFLLAPAMAGEVARRLLTEQGQPERRAS</sequence>
<feature type="chain" id="PRO_0000072517" description="Putative thiamine biosynthesis oxidoreductase ThiO">
    <location>
        <begin position="1"/>
        <end position="327"/>
    </location>
</feature>
<name>THIO_RHIEC</name>
<gene>
    <name type="primary">thiO</name>
    <name type="ordered locus">RHE_PB00081</name>
</gene>
<comment type="function">
    <text>May have amino acid oxidase activity in the biosynthesis of thiazole when cysteine gives its thiol group to be inserted into the thiazole molecule and the rest of the molecule is deaminated to give pyruvic acid and ammonia.</text>
</comment>
<comment type="pathway">
    <text>Cofactor biosynthesis; thiamine diphosphate biosynthesis.</text>
</comment>